<gene>
    <name type="ordered locus">SAR1936</name>
</gene>
<comment type="similarity">
    <text evidence="1">Belongs to the UPF0342 family.</text>
</comment>
<dbReference type="EMBL" id="BX571856">
    <property type="protein sequence ID" value="CAG40923.1"/>
    <property type="molecule type" value="Genomic_DNA"/>
</dbReference>
<dbReference type="RefSeq" id="WP_000290301.1">
    <property type="nucleotide sequence ID" value="NC_002952.2"/>
</dbReference>
<dbReference type="SMR" id="Q6GFL1"/>
<dbReference type="KEGG" id="sar:SAR1936"/>
<dbReference type="HOGENOM" id="CLU_140243_3_0_9"/>
<dbReference type="Proteomes" id="UP000000596">
    <property type="component" value="Chromosome"/>
</dbReference>
<dbReference type="Gene3D" id="1.20.1500.10">
    <property type="entry name" value="YheA/YmcA-like"/>
    <property type="match status" value="1"/>
</dbReference>
<dbReference type="HAMAP" id="MF_01526">
    <property type="entry name" value="UPF0342"/>
    <property type="match status" value="1"/>
</dbReference>
<dbReference type="InterPro" id="IPR010368">
    <property type="entry name" value="Com_YlbF"/>
</dbReference>
<dbReference type="InterPro" id="IPR023378">
    <property type="entry name" value="YheA/YmcA-like_dom_sf"/>
</dbReference>
<dbReference type="NCBIfam" id="NF010212">
    <property type="entry name" value="PRK13676.1-5"/>
    <property type="match status" value="1"/>
</dbReference>
<dbReference type="Pfam" id="PF06133">
    <property type="entry name" value="Com_YlbF"/>
    <property type="match status" value="1"/>
</dbReference>
<dbReference type="SUPFAM" id="SSF158622">
    <property type="entry name" value="YheA/YmcA-like"/>
    <property type="match status" value="1"/>
</dbReference>
<sequence length="114" mass="13310">MAVNLYDYANQLEQALRESEEYKAIKEAFANVKANEESKKLFDEFRETQINFQQKQMQGEEIAEEDLQKAQEQAQAIEKDENISALMNAEQKMSQVFQEINQIIVKPLDEIYAD</sequence>
<protein>
    <recommendedName>
        <fullName evidence="1">UPF0342 protein SAR1936</fullName>
    </recommendedName>
</protein>
<reference key="1">
    <citation type="journal article" date="2004" name="Proc. Natl. Acad. Sci. U.S.A.">
        <title>Complete genomes of two clinical Staphylococcus aureus strains: evidence for the rapid evolution of virulence and drug resistance.</title>
        <authorList>
            <person name="Holden M.T.G."/>
            <person name="Feil E.J."/>
            <person name="Lindsay J.A."/>
            <person name="Peacock S.J."/>
            <person name="Day N.P.J."/>
            <person name="Enright M.C."/>
            <person name="Foster T.J."/>
            <person name="Moore C.E."/>
            <person name="Hurst L."/>
            <person name="Atkin R."/>
            <person name="Barron A."/>
            <person name="Bason N."/>
            <person name="Bentley S.D."/>
            <person name="Chillingworth C."/>
            <person name="Chillingworth T."/>
            <person name="Churcher C."/>
            <person name="Clark L."/>
            <person name="Corton C."/>
            <person name="Cronin A."/>
            <person name="Doggett J."/>
            <person name="Dowd L."/>
            <person name="Feltwell T."/>
            <person name="Hance Z."/>
            <person name="Harris B."/>
            <person name="Hauser H."/>
            <person name="Holroyd S."/>
            <person name="Jagels K."/>
            <person name="James K.D."/>
            <person name="Lennard N."/>
            <person name="Line A."/>
            <person name="Mayes R."/>
            <person name="Moule S."/>
            <person name="Mungall K."/>
            <person name="Ormond D."/>
            <person name="Quail M.A."/>
            <person name="Rabbinowitsch E."/>
            <person name="Rutherford K.M."/>
            <person name="Sanders M."/>
            <person name="Sharp S."/>
            <person name="Simmonds M."/>
            <person name="Stevens K."/>
            <person name="Whitehead S."/>
            <person name="Barrell B.G."/>
            <person name="Spratt B.G."/>
            <person name="Parkhill J."/>
        </authorList>
    </citation>
    <scope>NUCLEOTIDE SEQUENCE [LARGE SCALE GENOMIC DNA]</scope>
    <source>
        <strain>MRSA252</strain>
    </source>
</reference>
<feature type="chain" id="PRO_0000109986" description="UPF0342 protein SAR1936">
    <location>
        <begin position="1"/>
        <end position="114"/>
    </location>
</feature>
<proteinExistence type="inferred from homology"/>
<organism>
    <name type="scientific">Staphylococcus aureus (strain MRSA252)</name>
    <dbReference type="NCBI Taxonomy" id="282458"/>
    <lineage>
        <taxon>Bacteria</taxon>
        <taxon>Bacillati</taxon>
        <taxon>Bacillota</taxon>
        <taxon>Bacilli</taxon>
        <taxon>Bacillales</taxon>
        <taxon>Staphylococcaceae</taxon>
        <taxon>Staphylococcus</taxon>
    </lineage>
</organism>
<evidence type="ECO:0000255" key="1">
    <source>
        <dbReference type="HAMAP-Rule" id="MF_01526"/>
    </source>
</evidence>
<name>Y1936_STAAR</name>
<accession>Q6GFL1</accession>